<name>RL27_YERPN</name>
<accession>Q1CEJ8</accession>
<accession>C4GXW3</accession>
<organism>
    <name type="scientific">Yersinia pestis bv. Antiqua (strain Nepal516)</name>
    <dbReference type="NCBI Taxonomy" id="377628"/>
    <lineage>
        <taxon>Bacteria</taxon>
        <taxon>Pseudomonadati</taxon>
        <taxon>Pseudomonadota</taxon>
        <taxon>Gammaproteobacteria</taxon>
        <taxon>Enterobacterales</taxon>
        <taxon>Yersiniaceae</taxon>
        <taxon>Yersinia</taxon>
    </lineage>
</organism>
<proteinExistence type="inferred from homology"/>
<protein>
    <recommendedName>
        <fullName evidence="1">Large ribosomal subunit protein bL27</fullName>
    </recommendedName>
    <alternativeName>
        <fullName evidence="3">50S ribosomal protein L27</fullName>
    </alternativeName>
</protein>
<gene>
    <name evidence="1" type="primary">rpmA</name>
    <name type="ordered locus">YPN_3255</name>
    <name type="ORF">YP516_3698</name>
</gene>
<keyword id="KW-0687">Ribonucleoprotein</keyword>
<keyword id="KW-0689">Ribosomal protein</keyword>
<dbReference type="EMBL" id="CP000305">
    <property type="protein sequence ID" value="ABG19582.1"/>
    <property type="molecule type" value="Genomic_DNA"/>
</dbReference>
<dbReference type="EMBL" id="ACNQ01000017">
    <property type="protein sequence ID" value="EEO75763.1"/>
    <property type="molecule type" value="Genomic_DNA"/>
</dbReference>
<dbReference type="RefSeq" id="WP_002210179.1">
    <property type="nucleotide sequence ID" value="NZ_ACNQ01000017.1"/>
</dbReference>
<dbReference type="SMR" id="Q1CEJ8"/>
<dbReference type="GeneID" id="97457883"/>
<dbReference type="KEGG" id="ypn:YPN_3255"/>
<dbReference type="HOGENOM" id="CLU_095424_4_1_6"/>
<dbReference type="Proteomes" id="UP000008936">
    <property type="component" value="Chromosome"/>
</dbReference>
<dbReference type="GO" id="GO:0022625">
    <property type="term" value="C:cytosolic large ribosomal subunit"/>
    <property type="evidence" value="ECO:0007669"/>
    <property type="project" value="TreeGrafter"/>
</dbReference>
<dbReference type="GO" id="GO:0003735">
    <property type="term" value="F:structural constituent of ribosome"/>
    <property type="evidence" value="ECO:0007669"/>
    <property type="project" value="InterPro"/>
</dbReference>
<dbReference type="GO" id="GO:0006412">
    <property type="term" value="P:translation"/>
    <property type="evidence" value="ECO:0007669"/>
    <property type="project" value="UniProtKB-UniRule"/>
</dbReference>
<dbReference type="FunFam" id="2.40.50.100:FF:000001">
    <property type="entry name" value="50S ribosomal protein L27"/>
    <property type="match status" value="1"/>
</dbReference>
<dbReference type="Gene3D" id="2.40.50.100">
    <property type="match status" value="1"/>
</dbReference>
<dbReference type="HAMAP" id="MF_00539">
    <property type="entry name" value="Ribosomal_bL27"/>
    <property type="match status" value="1"/>
</dbReference>
<dbReference type="InterPro" id="IPR001684">
    <property type="entry name" value="Ribosomal_bL27"/>
</dbReference>
<dbReference type="InterPro" id="IPR018261">
    <property type="entry name" value="Ribosomal_bL27_CS"/>
</dbReference>
<dbReference type="NCBIfam" id="TIGR00062">
    <property type="entry name" value="L27"/>
    <property type="match status" value="1"/>
</dbReference>
<dbReference type="PANTHER" id="PTHR15893:SF0">
    <property type="entry name" value="LARGE RIBOSOMAL SUBUNIT PROTEIN BL27M"/>
    <property type="match status" value="1"/>
</dbReference>
<dbReference type="PANTHER" id="PTHR15893">
    <property type="entry name" value="RIBOSOMAL PROTEIN L27"/>
    <property type="match status" value="1"/>
</dbReference>
<dbReference type="Pfam" id="PF01016">
    <property type="entry name" value="Ribosomal_L27"/>
    <property type="match status" value="1"/>
</dbReference>
<dbReference type="PRINTS" id="PR00063">
    <property type="entry name" value="RIBOSOMALL27"/>
</dbReference>
<dbReference type="SUPFAM" id="SSF110324">
    <property type="entry name" value="Ribosomal L27 protein-like"/>
    <property type="match status" value="1"/>
</dbReference>
<dbReference type="PROSITE" id="PS00831">
    <property type="entry name" value="RIBOSOMAL_L27"/>
    <property type="match status" value="1"/>
</dbReference>
<evidence type="ECO:0000255" key="1">
    <source>
        <dbReference type="HAMAP-Rule" id="MF_00539"/>
    </source>
</evidence>
<evidence type="ECO:0000256" key="2">
    <source>
        <dbReference type="SAM" id="MobiDB-lite"/>
    </source>
</evidence>
<evidence type="ECO:0000305" key="3"/>
<sequence>MAHKKAGGSTRNGRDSESKRLGVKRFGGEAVLAGSIIVRQRGTKFHAGINVGCGKDHTLFALADGKVKFEVKGPKNRKFISIEAE</sequence>
<feature type="chain" id="PRO_1000017651" description="Large ribosomal subunit protein bL27">
    <location>
        <begin position="1"/>
        <end position="85"/>
    </location>
</feature>
<feature type="region of interest" description="Disordered" evidence="2">
    <location>
        <begin position="1"/>
        <end position="20"/>
    </location>
</feature>
<comment type="similarity">
    <text evidence="1">Belongs to the bacterial ribosomal protein bL27 family.</text>
</comment>
<reference key="1">
    <citation type="journal article" date="2006" name="J. Bacteriol.">
        <title>Complete genome sequence of Yersinia pestis strains Antiqua and Nepal516: evidence of gene reduction in an emerging pathogen.</title>
        <authorList>
            <person name="Chain P.S.G."/>
            <person name="Hu P."/>
            <person name="Malfatti S.A."/>
            <person name="Radnedge L."/>
            <person name="Larimer F."/>
            <person name="Vergez L.M."/>
            <person name="Worsham P."/>
            <person name="Chu M.C."/>
            <person name="Andersen G.L."/>
        </authorList>
    </citation>
    <scope>NUCLEOTIDE SEQUENCE [LARGE SCALE GENOMIC DNA]</scope>
    <source>
        <strain>Nepal516</strain>
    </source>
</reference>
<reference key="2">
    <citation type="submission" date="2009-04" db="EMBL/GenBank/DDBJ databases">
        <title>Yersinia pestis Nepal516A whole genome shotgun sequencing project.</title>
        <authorList>
            <person name="Plunkett G. III"/>
            <person name="Anderson B.D."/>
            <person name="Baumler D.J."/>
            <person name="Burland V."/>
            <person name="Cabot E.L."/>
            <person name="Glasner J.D."/>
            <person name="Mau B."/>
            <person name="Neeno-Eckwall E."/>
            <person name="Perna N.T."/>
            <person name="Munk A.C."/>
            <person name="Tapia R."/>
            <person name="Green L.D."/>
            <person name="Rogers Y.C."/>
            <person name="Detter J.C."/>
            <person name="Bruce D.C."/>
            <person name="Brettin T.S."/>
        </authorList>
    </citation>
    <scope>NUCLEOTIDE SEQUENCE [LARGE SCALE GENOMIC DNA]</scope>
    <source>
        <strain>Nepal516</strain>
    </source>
</reference>